<keyword id="KW-0084">Basement membrane</keyword>
<keyword id="KW-0130">Cell adhesion</keyword>
<keyword id="KW-0175">Coiled coil</keyword>
<keyword id="KW-1015">Disulfide bond</keyword>
<keyword id="KW-0272">Extracellular matrix</keyword>
<keyword id="KW-0325">Glycoprotein</keyword>
<keyword id="KW-0358">Heparin-binding</keyword>
<keyword id="KW-0424">Laminin EGF-like domain</keyword>
<keyword id="KW-0654">Proteoglycan</keyword>
<keyword id="KW-1185">Reference proteome</keyword>
<keyword id="KW-0677">Repeat</keyword>
<keyword id="KW-0964">Secreted</keyword>
<keyword id="KW-0732">Signal</keyword>
<evidence type="ECO:0000250" key="1"/>
<evidence type="ECO:0000250" key="2">
    <source>
        <dbReference type="UniProtKB" id="Q13753"/>
    </source>
</evidence>
<evidence type="ECO:0000255" key="3"/>
<evidence type="ECO:0000255" key="4">
    <source>
        <dbReference type="PROSITE-ProRule" id="PRU00458"/>
    </source>
</evidence>
<evidence type="ECO:0000255" key="5">
    <source>
        <dbReference type="PROSITE-ProRule" id="PRU00460"/>
    </source>
</evidence>
<name>LAMC2_HORSE</name>
<sequence length="1190" mass="130846">MPALWLRCGLCLALLLPAARASSGSQVCDCNGKSRQCIFDQELHKQTGNGFRCLNCNDNTDGIHCERCKAGFYRQRERDRCLPCNCNSKGSLSARCDNSGRCSCKPGVTGDRCDRCLPGFHTLTDAGCAQDQRLLDSKCDCDPAGISGPCDSGRCVCKPAVTGERCDRCRPGYYHLDGGNPQGCTQCFCYGHSASCHSSGDYSVHKIISAFHQDVDGWKAVQRNGSPAKLQWSQRHRDIFSSARRSDPVYFVAPAKFLGNQQVSYGQSLSFDYRVDRGGRHPSAHDVILEGAGLRITAPLMPLSKTLPCGITKTYTFRLNEHPSSNWSPQLSYFEYRRLLRNLTALRIRATYGEYSTGYIDNVTLISARPVSGAPAPWVEQCVCPVGYKGQFCQDCASGYKRDSARLGPFGTCIPCNCQGGGACDPDTGDCYSGDENPDIPECADCPIGFYNDPQDPRSCKPCPCRNGFSCSVMPETEEVVCNNCPQGVTGARCELCADGYFGDPFGERGPVRPCQPCQCNNNVDPSASGNCDRLTGRCLKCIHNTAGVHCDQCKAGYYGDPLAPNPADKCRACNCNPVGSEPVECRSDGSCVCKPGFGGLSCEHAALTSCPACYNQVKVQMDQFMQQLQILEALISKAQGGAVPNAELEGRMQQAEQALRDILREAQISQDAVRSFNLRVAKARTQENSYRDRLDDLKMTVERVRALGSQYQNQVQDTRRLITQMRLSLEESEASLQNTNIPPSEHYVGPNGFKSLAQEATRLADSHVQSASNMEQLAKETQEYSKELMSLVREALQEGGGSGSLDGAVVQRLVGKLQKTKSLAQELSREATQTDMEADRSYQHSLHLLNSVSQIQGVNDQSLQVEAKRLRQKADSLSNRVTKHMDEFKHVQSNLGNWEEETRQLLQNGKNGRQTSDQLLSRANLAKSRAQEALSMGNATFYEVENILKNLREFDLQVGDKRAEAEEAMKRLSYISQKVAGASDKTKQAEAALGSAAADAQRAKNAAREALEISGKIEQEIGGLNLEANVTADGALAMEKGLATLKSEMREVEGELSRKEQEFDMDMDAVQMVIAEAQRVENRAKNAGVTIQDTLNTLDGILHLIDQPGSVDEERLILLEQKLFRAKTQINSQLRPLMSELEERAHRQKGHLRFLETSIDGILADVKNLENIRDNLPPGCYNTQALEQQ</sequence>
<proteinExistence type="evidence at transcript level"/>
<comment type="function">
    <text>Binding to cells via a high affinity receptor, laminin is thought to mediate the attachment, migration and organization of cells into tissues during embryonic development by interacting with other extracellular matrix components. Ladsin exerts cell-scattering activity toward a wide variety of cells, including epithelial, endothelial, and fibroblastic cells.</text>
</comment>
<comment type="subunit">
    <text>Laminin is a complex glycoprotein, consisting of three different polypeptide chains (alpha, beta, gamma), which are bound to each other by disulfide bonds into a cross-shaped molecule comprising one long and three short arms with globules at each end. Gamma-2 is a subunit of laminin-5 (laminin-332 or epiligrin/kalinin/nicein).</text>
</comment>
<comment type="subcellular location">
    <subcellularLocation>
        <location>Secreted</location>
        <location>Extracellular space</location>
        <location>Extracellular matrix</location>
        <location>Basement membrane</location>
    </subcellularLocation>
    <text>Major component.</text>
</comment>
<comment type="domain">
    <text>The alpha-helical domains I and II are thought to interact with other laminin chains to form a coiled coil structure.</text>
</comment>
<comment type="domain">
    <text>Domain IV is globular.</text>
</comment>
<comment type="PTM">
    <text evidence="2">O-glycosylated; contains chondroitin sulfate (CS).</text>
</comment>
<comment type="miscellaneous">
    <text evidence="1">Binds heparin.</text>
</comment>
<reference key="1">
    <citation type="journal article" date="2002" name="J. Invest. Dermatol.">
        <title>Animal models for skin blistering conditions: absence of laminin 5 causes hereditary junctional mechanobullous disease in the Belgian horse.</title>
        <authorList>
            <person name="Spirito F."/>
            <person name="Charlesworth A."/>
            <person name="Linder K."/>
            <person name="Ortonne J.-P."/>
            <person name="Baird J."/>
            <person name="Meneguzzi G."/>
        </authorList>
    </citation>
    <scope>NUCLEOTIDE SEQUENCE [MRNA]</scope>
</reference>
<feature type="signal peptide" evidence="3">
    <location>
        <begin position="1"/>
        <end position="21"/>
    </location>
</feature>
<feature type="chain" id="PRO_0000017076" description="Laminin subunit gamma-2">
    <location>
        <begin position="22"/>
        <end position="1190"/>
    </location>
</feature>
<feature type="domain" description="Laminin EGF-like 1" evidence="5">
    <location>
        <begin position="28"/>
        <end position="83"/>
    </location>
</feature>
<feature type="domain" description="Laminin EGF-like 2" evidence="5">
    <location>
        <begin position="84"/>
        <end position="130"/>
    </location>
</feature>
<feature type="domain" description="Laminin EGF-like 3" evidence="5">
    <location>
        <begin position="139"/>
        <end position="186"/>
    </location>
</feature>
<feature type="domain" description="Laminin EGF-like 4; first part" evidence="5">
    <location>
        <begin position="187"/>
        <end position="196"/>
    </location>
</feature>
<feature type="domain" description="Laminin IV type A" evidence="4">
    <location>
        <begin position="213"/>
        <end position="381"/>
    </location>
</feature>
<feature type="domain" description="Laminin EGF-like 4; second part" evidence="5">
    <location>
        <begin position="382"/>
        <end position="415"/>
    </location>
</feature>
<feature type="domain" description="Laminin EGF-like 5" evidence="5">
    <location>
        <begin position="416"/>
        <end position="462"/>
    </location>
</feature>
<feature type="domain" description="Laminin EGF-like 6" evidence="5">
    <location>
        <begin position="463"/>
        <end position="517"/>
    </location>
</feature>
<feature type="domain" description="Laminin EGF-like 7" evidence="5">
    <location>
        <begin position="518"/>
        <end position="573"/>
    </location>
</feature>
<feature type="domain" description="Laminin EGF-like 8; truncated" evidence="5">
    <location>
        <begin position="574"/>
        <end position="603"/>
    </location>
</feature>
<feature type="region of interest" description="Domain II and I" evidence="1">
    <location>
        <begin position="604"/>
        <end position="1190"/>
    </location>
</feature>
<feature type="coiled-coil region" evidence="3">
    <location>
        <begin position="613"/>
        <end position="718"/>
    </location>
</feature>
<feature type="coiled-coil region" evidence="3">
    <location>
        <begin position="809"/>
        <end position="1073"/>
    </location>
</feature>
<feature type="coiled-coil region" evidence="3">
    <location>
        <begin position="1114"/>
        <end position="1190"/>
    </location>
</feature>
<feature type="glycosylation site" description="N-linked (GlcNAc...) asparagine" evidence="3">
    <location>
        <position position="342"/>
    </location>
</feature>
<feature type="glycosylation site" description="N-linked (GlcNAc...) asparagine" evidence="3">
    <location>
        <position position="362"/>
    </location>
</feature>
<feature type="glycosylation site" description="O-linked (Xyl...) (chondroitin sulfate) serine" evidence="3">
    <location>
        <position position="803"/>
    </location>
</feature>
<feature type="glycosylation site" description="N-linked (GlcNAc...) asparagine" evidence="3">
    <location>
        <position position="939"/>
    </location>
</feature>
<feature type="glycosylation site" description="N-linked (GlcNAc...) asparagine" evidence="3">
    <location>
        <position position="1030"/>
    </location>
</feature>
<feature type="disulfide bond" evidence="5">
    <location>
        <begin position="28"/>
        <end position="37"/>
    </location>
</feature>
<feature type="disulfide bond" evidence="5">
    <location>
        <begin position="30"/>
        <end position="53"/>
    </location>
</feature>
<feature type="disulfide bond" evidence="5">
    <location>
        <begin position="56"/>
        <end position="65"/>
    </location>
</feature>
<feature type="disulfide bond" evidence="5">
    <location>
        <begin position="68"/>
        <end position="81"/>
    </location>
</feature>
<feature type="disulfide bond" evidence="5">
    <location>
        <begin position="84"/>
        <end position="96"/>
    </location>
</feature>
<feature type="disulfide bond" evidence="5">
    <location>
        <begin position="86"/>
        <end position="102"/>
    </location>
</feature>
<feature type="disulfide bond" evidence="5">
    <location>
        <begin position="104"/>
        <end position="113"/>
    </location>
</feature>
<feature type="disulfide bond" evidence="5">
    <location>
        <begin position="116"/>
        <end position="128"/>
    </location>
</feature>
<feature type="disulfide bond" evidence="5">
    <location>
        <begin position="139"/>
        <end position="150"/>
    </location>
</feature>
<feature type="disulfide bond" evidence="5">
    <location>
        <begin position="141"/>
        <end position="155"/>
    </location>
</feature>
<feature type="disulfide bond" evidence="5">
    <location>
        <begin position="157"/>
        <end position="166"/>
    </location>
</feature>
<feature type="disulfide bond" evidence="5">
    <location>
        <begin position="169"/>
        <end position="184"/>
    </location>
</feature>
<feature type="disulfide bond" evidence="5">
    <location>
        <begin position="463"/>
        <end position="471"/>
    </location>
</feature>
<feature type="disulfide bond" evidence="5">
    <location>
        <begin position="465"/>
        <end position="482"/>
    </location>
</feature>
<feature type="disulfide bond" evidence="5">
    <location>
        <begin position="485"/>
        <end position="494"/>
    </location>
</feature>
<feature type="disulfide bond" evidence="5">
    <location>
        <begin position="497"/>
        <end position="515"/>
    </location>
</feature>
<feature type="disulfide bond" evidence="5">
    <location>
        <begin position="518"/>
        <end position="532"/>
    </location>
</feature>
<feature type="disulfide bond" evidence="5">
    <location>
        <begin position="520"/>
        <end position="539"/>
    </location>
</feature>
<feature type="disulfide bond" evidence="5">
    <location>
        <begin position="542"/>
        <end position="551"/>
    </location>
</feature>
<feature type="disulfide bond" evidence="5">
    <location>
        <begin position="554"/>
        <end position="571"/>
    </location>
</feature>
<feature type="disulfide bond" evidence="5">
    <location>
        <begin position="574"/>
        <end position="586"/>
    </location>
</feature>
<feature type="disulfide bond" evidence="5">
    <location>
        <begin position="576"/>
        <end position="592"/>
    </location>
</feature>
<feature type="disulfide bond" evidence="5">
    <location>
        <begin position="594"/>
        <end position="603"/>
    </location>
</feature>
<feature type="disulfide bond" description="Interchain" evidence="5">
    <location>
        <position position="611"/>
    </location>
</feature>
<feature type="disulfide bond" description="Interchain" evidence="5">
    <location>
        <position position="614"/>
    </location>
</feature>
<feature type="disulfide bond" description="Interchain" evidence="5">
    <location>
        <position position="1181"/>
    </location>
</feature>
<dbReference type="EMBL" id="AY082802">
    <property type="protein sequence ID" value="AAM03454.1"/>
    <property type="molecule type" value="mRNA"/>
</dbReference>
<dbReference type="RefSeq" id="NP_001075237.1">
    <property type="nucleotide sequence ID" value="NM_001081768.1"/>
</dbReference>
<dbReference type="SMR" id="Q8HZI9"/>
<dbReference type="FunCoup" id="Q8HZI9">
    <property type="interactions" value="138"/>
</dbReference>
<dbReference type="STRING" id="9796.ENSECAP00000031292"/>
<dbReference type="GlyCosmos" id="Q8HZI9">
    <property type="glycosylation" value="4 sites, No reported glycans"/>
</dbReference>
<dbReference type="PaxDb" id="9796-ENSECAP00000031292"/>
<dbReference type="GeneID" id="791245"/>
<dbReference type="KEGG" id="ecb:791245"/>
<dbReference type="CTD" id="3918"/>
<dbReference type="InParanoid" id="Q8HZI9"/>
<dbReference type="OrthoDB" id="430826at2759"/>
<dbReference type="Proteomes" id="UP000002281">
    <property type="component" value="Unplaced"/>
</dbReference>
<dbReference type="GO" id="GO:0005604">
    <property type="term" value="C:basement membrane"/>
    <property type="evidence" value="ECO:0000318"/>
    <property type="project" value="GO_Central"/>
</dbReference>
<dbReference type="GO" id="GO:0005576">
    <property type="term" value="C:extracellular region"/>
    <property type="evidence" value="ECO:0007669"/>
    <property type="project" value="UniProtKB-KW"/>
</dbReference>
<dbReference type="GO" id="GO:0008201">
    <property type="term" value="F:heparin binding"/>
    <property type="evidence" value="ECO:0007669"/>
    <property type="project" value="UniProtKB-KW"/>
</dbReference>
<dbReference type="GO" id="GO:0009887">
    <property type="term" value="P:animal organ morphogenesis"/>
    <property type="evidence" value="ECO:0000318"/>
    <property type="project" value="GO_Central"/>
</dbReference>
<dbReference type="GO" id="GO:0007411">
    <property type="term" value="P:axon guidance"/>
    <property type="evidence" value="ECO:0000318"/>
    <property type="project" value="GO_Central"/>
</dbReference>
<dbReference type="GO" id="GO:0007155">
    <property type="term" value="P:cell adhesion"/>
    <property type="evidence" value="ECO:0007669"/>
    <property type="project" value="UniProtKB-KW"/>
</dbReference>
<dbReference type="GO" id="GO:0009888">
    <property type="term" value="P:tissue development"/>
    <property type="evidence" value="ECO:0000318"/>
    <property type="project" value="GO_Central"/>
</dbReference>
<dbReference type="CDD" id="cd00055">
    <property type="entry name" value="EGF_Lam"/>
    <property type="match status" value="6"/>
</dbReference>
<dbReference type="FunFam" id="2.10.25.10:FF:000067">
    <property type="entry name" value="Laminin subunit gamma 1"/>
    <property type="match status" value="1"/>
</dbReference>
<dbReference type="FunFam" id="2.10.25.10:FF:000399">
    <property type="entry name" value="Laminin subunit gamma 2"/>
    <property type="match status" value="1"/>
</dbReference>
<dbReference type="FunFam" id="2.10.25.10:FF:000441">
    <property type="entry name" value="Laminin subunit gamma 2"/>
    <property type="match status" value="1"/>
</dbReference>
<dbReference type="FunFam" id="2.10.25.10:FF:000533">
    <property type="entry name" value="Laminin subunit gamma 2"/>
    <property type="match status" value="1"/>
</dbReference>
<dbReference type="FunFam" id="2.10.25.10:FF:000174">
    <property type="entry name" value="Laminin subunit gamma-1"/>
    <property type="match status" value="1"/>
</dbReference>
<dbReference type="Gene3D" id="2.10.25.10">
    <property type="entry name" value="Laminin"/>
    <property type="match status" value="5"/>
</dbReference>
<dbReference type="InterPro" id="IPR000742">
    <property type="entry name" value="EGF-like_dom"/>
</dbReference>
<dbReference type="InterPro" id="IPR050440">
    <property type="entry name" value="Laminin/Netrin_ECM"/>
</dbReference>
<dbReference type="InterPro" id="IPR000034">
    <property type="entry name" value="Laminin_IV"/>
</dbReference>
<dbReference type="InterPro" id="IPR002049">
    <property type="entry name" value="LE_dom"/>
</dbReference>
<dbReference type="PANTHER" id="PTHR10574:SF313">
    <property type="entry name" value="LAMININ SUBUNIT GAMMA-2"/>
    <property type="match status" value="1"/>
</dbReference>
<dbReference type="PANTHER" id="PTHR10574">
    <property type="entry name" value="NETRIN/LAMININ-RELATED"/>
    <property type="match status" value="1"/>
</dbReference>
<dbReference type="Pfam" id="PF00053">
    <property type="entry name" value="EGF_laminin"/>
    <property type="match status" value="7"/>
</dbReference>
<dbReference type="Pfam" id="PF00052">
    <property type="entry name" value="Laminin_B"/>
    <property type="match status" value="1"/>
</dbReference>
<dbReference type="PRINTS" id="PR00011">
    <property type="entry name" value="EGFLAMININ"/>
</dbReference>
<dbReference type="SMART" id="SM00181">
    <property type="entry name" value="EGF"/>
    <property type="match status" value="7"/>
</dbReference>
<dbReference type="SMART" id="SM00180">
    <property type="entry name" value="EGF_Lam"/>
    <property type="match status" value="6"/>
</dbReference>
<dbReference type="SMART" id="SM00281">
    <property type="entry name" value="LamB"/>
    <property type="match status" value="1"/>
</dbReference>
<dbReference type="SUPFAM" id="SSF57196">
    <property type="entry name" value="EGF/Laminin"/>
    <property type="match status" value="5"/>
</dbReference>
<dbReference type="PROSITE" id="PS00022">
    <property type="entry name" value="EGF_1"/>
    <property type="match status" value="4"/>
</dbReference>
<dbReference type="PROSITE" id="PS01186">
    <property type="entry name" value="EGF_2"/>
    <property type="match status" value="2"/>
</dbReference>
<dbReference type="PROSITE" id="PS01248">
    <property type="entry name" value="EGF_LAM_1"/>
    <property type="match status" value="6"/>
</dbReference>
<dbReference type="PROSITE" id="PS50027">
    <property type="entry name" value="EGF_LAM_2"/>
    <property type="match status" value="6"/>
</dbReference>
<dbReference type="PROSITE" id="PS51115">
    <property type="entry name" value="LAMININ_IVA"/>
    <property type="match status" value="1"/>
</dbReference>
<protein>
    <recommendedName>
        <fullName>Laminin subunit gamma-2</fullName>
    </recommendedName>
    <alternativeName>
        <fullName>Epiligrin subunit gamma</fullName>
    </alternativeName>
    <alternativeName>
        <fullName>Kalinin subunit gamma</fullName>
    </alternativeName>
    <alternativeName>
        <fullName>Laminin-5 subunit gamma</fullName>
    </alternativeName>
    <alternativeName>
        <fullName>Nicein subunit gamma</fullName>
    </alternativeName>
</protein>
<gene>
    <name type="primary">LAMC2</name>
</gene>
<accession>Q8HZI9</accession>
<organism>
    <name type="scientific">Equus caballus</name>
    <name type="common">Horse</name>
    <dbReference type="NCBI Taxonomy" id="9796"/>
    <lineage>
        <taxon>Eukaryota</taxon>
        <taxon>Metazoa</taxon>
        <taxon>Chordata</taxon>
        <taxon>Craniata</taxon>
        <taxon>Vertebrata</taxon>
        <taxon>Euteleostomi</taxon>
        <taxon>Mammalia</taxon>
        <taxon>Eutheria</taxon>
        <taxon>Laurasiatheria</taxon>
        <taxon>Perissodactyla</taxon>
        <taxon>Equidae</taxon>
        <taxon>Equus</taxon>
    </lineage>
</organism>